<protein>
    <recommendedName>
        <fullName evidence="1">Translational regulator CsrA</fullName>
    </recommendedName>
</protein>
<name>CSRA_LEPBA</name>
<evidence type="ECO:0000255" key="1">
    <source>
        <dbReference type="HAMAP-Rule" id="MF_00167"/>
    </source>
</evidence>
<accession>B0SGR0</accession>
<organism>
    <name type="scientific">Leptospira biflexa serovar Patoc (strain Patoc 1 / Ames)</name>
    <dbReference type="NCBI Taxonomy" id="355278"/>
    <lineage>
        <taxon>Bacteria</taxon>
        <taxon>Pseudomonadati</taxon>
        <taxon>Spirochaetota</taxon>
        <taxon>Spirochaetia</taxon>
        <taxon>Leptospirales</taxon>
        <taxon>Leptospiraceae</taxon>
        <taxon>Leptospira</taxon>
    </lineage>
</organism>
<reference key="1">
    <citation type="journal article" date="2008" name="PLoS ONE">
        <title>Genome sequence of the saprophyte Leptospira biflexa provides insights into the evolution of Leptospira and the pathogenesis of leptospirosis.</title>
        <authorList>
            <person name="Picardeau M."/>
            <person name="Bulach D.M."/>
            <person name="Bouchier C."/>
            <person name="Zuerner R.L."/>
            <person name="Zidane N."/>
            <person name="Wilson P.J."/>
            <person name="Creno S."/>
            <person name="Kuczek E.S."/>
            <person name="Bommezzadri S."/>
            <person name="Davis J.C."/>
            <person name="McGrath A."/>
            <person name="Johnson M.J."/>
            <person name="Boursaux-Eude C."/>
            <person name="Seemann T."/>
            <person name="Rouy Z."/>
            <person name="Coppel R.L."/>
            <person name="Rood J.I."/>
            <person name="Lajus A."/>
            <person name="Davies J.K."/>
            <person name="Medigue C."/>
            <person name="Adler B."/>
        </authorList>
    </citation>
    <scope>NUCLEOTIDE SEQUENCE [LARGE SCALE GENOMIC DNA]</scope>
    <source>
        <strain>Patoc 1 / Ames</strain>
    </source>
</reference>
<sequence length="79" mass="8773">MLVLARRSNQSIMIGDDIEIVIVDIKGDQVKIGVKAPKNVSVHRAEVYKEIQEENKKAAGTNIKPEDLGKLGDLFKKKT</sequence>
<gene>
    <name evidence="1" type="primary">csrA</name>
    <name type="ordered locus">LBF_3098</name>
</gene>
<proteinExistence type="inferred from homology"/>
<dbReference type="EMBL" id="CP000777">
    <property type="protein sequence ID" value="ABZ95567.1"/>
    <property type="molecule type" value="Genomic_DNA"/>
</dbReference>
<dbReference type="RefSeq" id="WP_012390131.1">
    <property type="nucleotide sequence ID" value="NC_010842.1"/>
</dbReference>
<dbReference type="SMR" id="B0SGR0"/>
<dbReference type="GeneID" id="93340871"/>
<dbReference type="KEGG" id="lbf:LBF_3098"/>
<dbReference type="HOGENOM" id="CLU_164837_0_0_12"/>
<dbReference type="GO" id="GO:0005829">
    <property type="term" value="C:cytosol"/>
    <property type="evidence" value="ECO:0007669"/>
    <property type="project" value="TreeGrafter"/>
</dbReference>
<dbReference type="GO" id="GO:0048027">
    <property type="term" value="F:mRNA 5'-UTR binding"/>
    <property type="evidence" value="ECO:0007669"/>
    <property type="project" value="UniProtKB-UniRule"/>
</dbReference>
<dbReference type="GO" id="GO:0044781">
    <property type="term" value="P:bacterial-type flagellum organization"/>
    <property type="evidence" value="ECO:0007669"/>
    <property type="project" value="UniProtKB-KW"/>
</dbReference>
<dbReference type="GO" id="GO:0006402">
    <property type="term" value="P:mRNA catabolic process"/>
    <property type="evidence" value="ECO:0007669"/>
    <property type="project" value="InterPro"/>
</dbReference>
<dbReference type="GO" id="GO:0045947">
    <property type="term" value="P:negative regulation of translational initiation"/>
    <property type="evidence" value="ECO:0007669"/>
    <property type="project" value="UniProtKB-UniRule"/>
</dbReference>
<dbReference type="GO" id="GO:1902208">
    <property type="term" value="P:regulation of bacterial-type flagellum assembly"/>
    <property type="evidence" value="ECO:0007669"/>
    <property type="project" value="UniProtKB-UniRule"/>
</dbReference>
<dbReference type="GO" id="GO:0006109">
    <property type="term" value="P:regulation of carbohydrate metabolic process"/>
    <property type="evidence" value="ECO:0007669"/>
    <property type="project" value="InterPro"/>
</dbReference>
<dbReference type="FunFam" id="2.60.40.4380:FF:000002">
    <property type="entry name" value="Translational regulator CsrA"/>
    <property type="match status" value="1"/>
</dbReference>
<dbReference type="Gene3D" id="2.60.40.4380">
    <property type="entry name" value="Translational regulator CsrA"/>
    <property type="match status" value="1"/>
</dbReference>
<dbReference type="HAMAP" id="MF_00167">
    <property type="entry name" value="CsrA"/>
    <property type="match status" value="1"/>
</dbReference>
<dbReference type="InterPro" id="IPR003751">
    <property type="entry name" value="CsrA"/>
</dbReference>
<dbReference type="InterPro" id="IPR036107">
    <property type="entry name" value="CsrA_sf"/>
</dbReference>
<dbReference type="NCBIfam" id="TIGR00202">
    <property type="entry name" value="csrA"/>
    <property type="match status" value="1"/>
</dbReference>
<dbReference type="NCBIfam" id="NF002469">
    <property type="entry name" value="PRK01712.1"/>
    <property type="match status" value="1"/>
</dbReference>
<dbReference type="PANTHER" id="PTHR34984">
    <property type="entry name" value="CARBON STORAGE REGULATOR"/>
    <property type="match status" value="1"/>
</dbReference>
<dbReference type="PANTHER" id="PTHR34984:SF1">
    <property type="entry name" value="CARBON STORAGE REGULATOR"/>
    <property type="match status" value="1"/>
</dbReference>
<dbReference type="Pfam" id="PF02599">
    <property type="entry name" value="CsrA"/>
    <property type="match status" value="1"/>
</dbReference>
<dbReference type="SUPFAM" id="SSF117130">
    <property type="entry name" value="CsrA-like"/>
    <property type="match status" value="1"/>
</dbReference>
<comment type="function">
    <text evidence="1">A translational regulator that binds mRNA to regulate translation initiation and/or mRNA stability. Usually binds in the 5'-UTR at or near the Shine-Dalgarno sequence preventing ribosome-binding, thus repressing translation. Its main target seems to be the major flagellin gene, while its function is anatagonized by FliW.</text>
</comment>
<comment type="subunit">
    <text evidence="1">Homodimer; the beta-strands of each monomer intercalate to form a hydrophobic core, while the alpha-helices form wings that extend away from the core.</text>
</comment>
<comment type="subcellular location">
    <subcellularLocation>
        <location evidence="1">Cytoplasm</location>
    </subcellularLocation>
</comment>
<comment type="similarity">
    <text evidence="1">Belongs to the CsrA/RsmA family.</text>
</comment>
<keyword id="KW-1005">Bacterial flagellum biogenesis</keyword>
<keyword id="KW-0963">Cytoplasm</keyword>
<keyword id="KW-0678">Repressor</keyword>
<keyword id="KW-0694">RNA-binding</keyword>
<keyword id="KW-0810">Translation regulation</keyword>
<feature type="chain" id="PRO_1000097497" description="Translational regulator CsrA">
    <location>
        <begin position="1"/>
        <end position="79"/>
    </location>
</feature>